<keyword id="KW-1185">Reference proteome</keyword>
<organismHost>
    <name type="scientific">Acanthamoeba polyphaga</name>
    <name type="common">Amoeba</name>
    <dbReference type="NCBI Taxonomy" id="5757"/>
</organismHost>
<dbReference type="EMBL" id="AY653733">
    <property type="protein sequence ID" value="AAV50498.1"/>
    <property type="molecule type" value="Genomic_DNA"/>
</dbReference>
<dbReference type="KEGG" id="vg:9924832"/>
<dbReference type="OrthoDB" id="7868at10239"/>
<dbReference type="Proteomes" id="UP000001134">
    <property type="component" value="Genome"/>
</dbReference>
<dbReference type="CDD" id="cd18186">
    <property type="entry name" value="BTB_POZ_ZBTB_KLHL-like"/>
    <property type="match status" value="1"/>
</dbReference>
<dbReference type="Gene3D" id="3.30.710.10">
    <property type="entry name" value="Potassium Channel Kv1.1, Chain A"/>
    <property type="match status" value="1"/>
</dbReference>
<dbReference type="InterPro" id="IPR000210">
    <property type="entry name" value="BTB/POZ_dom"/>
</dbReference>
<dbReference type="InterPro" id="IPR011333">
    <property type="entry name" value="SKP1/BTB/POZ_sf"/>
</dbReference>
<dbReference type="SUPFAM" id="SSF54695">
    <property type="entry name" value="POZ domain"/>
    <property type="match status" value="1"/>
</dbReference>
<dbReference type="SUPFAM" id="SSF69322">
    <property type="entry name" value="Tricorn protease domain 2"/>
    <property type="match status" value="1"/>
</dbReference>
<dbReference type="PROSITE" id="PS50097">
    <property type="entry name" value="BTB"/>
    <property type="match status" value="1"/>
</dbReference>
<organism>
    <name type="scientific">Acanthamoeba polyphaga mimivirus</name>
    <name type="common">APMV</name>
    <dbReference type="NCBI Taxonomy" id="212035"/>
    <lineage>
        <taxon>Viruses</taxon>
        <taxon>Varidnaviria</taxon>
        <taxon>Bamfordvirae</taxon>
        <taxon>Nucleocytoviricota</taxon>
        <taxon>Megaviricetes</taxon>
        <taxon>Imitervirales</taxon>
        <taxon>Mimiviridae</taxon>
        <taxon>Megamimivirinae</taxon>
        <taxon>Mimivirus</taxon>
        <taxon>Mimivirus bradfordmassiliense</taxon>
    </lineage>
</organism>
<sequence>MNYDKLFQNVINNKLTDLELVLTDPENNNLVLNLHKIVLDINCPYFETLFSNNFIDSNMKKLNLFVEDSYITRDIIYNFYGQTNRSTDYPDWLYQLKKIKCQNFLCMKPDFYRLSDFVFDKDNFDELLNTIDSIGYDDKVVSLIFKNMPVDYDLVKFPIELLNRMLDVSGFYIMYYDNNRFSMYNQYCEFVVFDGISDFDYSPNSQIIYVPNSQEIVYVSEKIVVFNIETQISRITDSINPVSSKNYPTLCPDQEHIIYYNNKWDAICKFNVKTMKLIGTWRASNGSEINMDENNGTYFFDSIGCKIVFSPSGDKFVLITDGIICYDVKTIKVCWRFNKIVPLSRVDLGYVPTCIRDVMYSLCRKYIFYLTKYGLFVINSSNGHLVSEMKVRGISICHITCDIVAILTYDNSGIIMYDYQNNMIISELNFSDNICFGGESKICMNYFDGKLFIIGSNNTNRIDYNYIINISDFTYEKNFTEKIDKSYYVCDNDIIKYNNCCNNCFNIVTDFKSVLRDKIKNHIESIN</sequence>
<gene>
    <name type="ordered locus">MIMI_R225</name>
</gene>
<reference key="1">
    <citation type="journal article" date="2004" name="Science">
        <title>The 1.2-megabase genome sequence of Mimivirus.</title>
        <authorList>
            <person name="Raoult D."/>
            <person name="Audic S."/>
            <person name="Robert C."/>
            <person name="Abergel C."/>
            <person name="Renesto P."/>
            <person name="Ogata H."/>
            <person name="La Scola B."/>
            <person name="Susan M."/>
            <person name="Claverie J.-M."/>
        </authorList>
    </citation>
    <scope>NUCLEOTIDE SEQUENCE [LARGE SCALE GENOMIC DNA]</scope>
    <source>
        <strain>Rowbotham-Bradford</strain>
    </source>
</reference>
<proteinExistence type="inferred from homology"/>
<protein>
    <recommendedName>
        <fullName>Putative BTB/POZ domain-containing protein R225</fullName>
    </recommendedName>
</protein>
<name>YR225_MIMIV</name>
<feature type="chain" id="PRO_0000186231" description="Putative BTB/POZ domain-containing protein R225">
    <location>
        <begin position="1"/>
        <end position="527"/>
    </location>
</feature>
<feature type="domain" description="BTB" evidence="1">
    <location>
        <begin position="16"/>
        <end position="89"/>
    </location>
</feature>
<comment type="similarity">
    <text evidence="2">Belongs to the mimivirus BTB/WD family.</text>
</comment>
<evidence type="ECO:0000255" key="1">
    <source>
        <dbReference type="PROSITE-ProRule" id="PRU00037"/>
    </source>
</evidence>
<evidence type="ECO:0000305" key="2"/>
<accession>Q5UQB6</accession>